<comment type="function">
    <text evidence="1">Guanylyltransferase that catalyzes the activation of phosphoenolpyruvate (PEP) as enolpyruvoyl-2-diphospho-5'-guanosine, via the condensation of PEP with GTP. It is involved in the biosynthesis of coenzyme F420, a hydride carrier cofactor.</text>
</comment>
<comment type="catalytic activity">
    <reaction evidence="1">
        <text>phosphoenolpyruvate + GTP + H(+) = enolpyruvoyl-2-diphospho-5'-guanosine + diphosphate</text>
        <dbReference type="Rhea" id="RHEA:30519"/>
        <dbReference type="ChEBI" id="CHEBI:15378"/>
        <dbReference type="ChEBI" id="CHEBI:33019"/>
        <dbReference type="ChEBI" id="CHEBI:37565"/>
        <dbReference type="ChEBI" id="CHEBI:58702"/>
        <dbReference type="ChEBI" id="CHEBI:143701"/>
        <dbReference type="EC" id="2.7.7.105"/>
    </reaction>
</comment>
<comment type="pathway">
    <text evidence="1">Cofactor biosynthesis; coenzyme F420 biosynthesis.</text>
</comment>
<comment type="similarity">
    <text evidence="1">Belongs to the CofC family.</text>
</comment>
<feature type="chain" id="PRO_0000398707" description="Phosphoenolpyruvate guanylyltransferase 1">
    <location>
        <begin position="1"/>
        <end position="233"/>
    </location>
</feature>
<feature type="binding site" evidence="1">
    <location>
        <position position="154"/>
    </location>
    <ligand>
        <name>phosphoenolpyruvate</name>
        <dbReference type="ChEBI" id="CHEBI:58702"/>
    </ligand>
</feature>
<feature type="binding site" evidence="1">
    <location>
        <position position="171"/>
    </location>
    <ligand>
        <name>phosphoenolpyruvate</name>
        <dbReference type="ChEBI" id="CHEBI:58702"/>
    </ligand>
</feature>
<feature type="binding site" evidence="1">
    <location>
        <position position="174"/>
    </location>
    <ligand>
        <name>phosphoenolpyruvate</name>
        <dbReference type="ChEBI" id="CHEBI:58702"/>
    </ligand>
</feature>
<dbReference type="EC" id="2.7.7.105" evidence="1"/>
<dbReference type="EMBL" id="CP000431">
    <property type="protein sequence ID" value="ABG98277.1"/>
    <property type="molecule type" value="Genomic_DNA"/>
</dbReference>
<dbReference type="SMR" id="Q0S2F9"/>
<dbReference type="KEGG" id="rha:RHA1_ro06504"/>
<dbReference type="eggNOG" id="COG1920">
    <property type="taxonomic scope" value="Bacteria"/>
</dbReference>
<dbReference type="HOGENOM" id="CLU_076569_0_0_11"/>
<dbReference type="UniPathway" id="UPA00071"/>
<dbReference type="Proteomes" id="UP000008710">
    <property type="component" value="Chromosome"/>
</dbReference>
<dbReference type="GO" id="GO:0005525">
    <property type="term" value="F:GTP binding"/>
    <property type="evidence" value="ECO:0007669"/>
    <property type="project" value="UniProtKB-KW"/>
</dbReference>
<dbReference type="GO" id="GO:0043814">
    <property type="term" value="F:phospholactate guanylyltransferase activity"/>
    <property type="evidence" value="ECO:0007669"/>
    <property type="project" value="InterPro"/>
</dbReference>
<dbReference type="GO" id="GO:0052645">
    <property type="term" value="P:F420-0 metabolic process"/>
    <property type="evidence" value="ECO:0007669"/>
    <property type="project" value="UniProtKB-UniRule"/>
</dbReference>
<dbReference type="Gene3D" id="3.90.550.10">
    <property type="entry name" value="Spore Coat Polysaccharide Biosynthesis Protein SpsA, Chain A"/>
    <property type="match status" value="1"/>
</dbReference>
<dbReference type="HAMAP" id="MF_02114">
    <property type="entry name" value="CofC"/>
    <property type="match status" value="1"/>
</dbReference>
<dbReference type="InterPro" id="IPR002835">
    <property type="entry name" value="CofC"/>
</dbReference>
<dbReference type="InterPro" id="IPR029044">
    <property type="entry name" value="Nucleotide-diphossugar_trans"/>
</dbReference>
<dbReference type="NCBIfam" id="TIGR03552">
    <property type="entry name" value="F420_cofC"/>
    <property type="match status" value="1"/>
</dbReference>
<dbReference type="PANTHER" id="PTHR40392">
    <property type="entry name" value="2-PHOSPHO-L-LACTATE GUANYLYLTRANSFERASE"/>
    <property type="match status" value="1"/>
</dbReference>
<dbReference type="PANTHER" id="PTHR40392:SF1">
    <property type="entry name" value="2-PHOSPHO-L-LACTATE GUANYLYLTRANSFERASE"/>
    <property type="match status" value="1"/>
</dbReference>
<dbReference type="Pfam" id="PF01983">
    <property type="entry name" value="CofC"/>
    <property type="match status" value="1"/>
</dbReference>
<dbReference type="SUPFAM" id="SSF53448">
    <property type="entry name" value="Nucleotide-diphospho-sugar transferases"/>
    <property type="match status" value="1"/>
</dbReference>
<sequence>MAPRAHVLVAVKELHAAKTRLSSVFDTADRTGLVLSMLRDTLAVVSDVATVVGVTVVTPDPAVARLARSVGAHVYADPAPVSAEDRPDEGGTEHSLNAALSAAAEHVRRNERGVDVVALQADLPSLRGGEFGEALAAARTGGRSVVVDHHGTGTAALFSCDPEIPLDPRFGPGSAKRHLESGARPLDGHWPGLRTDVDTADDLDAAQALGVGPATRAALDALEHTDPSRCGNE</sequence>
<keyword id="KW-0342">GTP-binding</keyword>
<keyword id="KW-0547">Nucleotide-binding</keyword>
<keyword id="KW-0548">Nucleotidyltransferase</keyword>
<keyword id="KW-0808">Transferase</keyword>
<organism>
    <name type="scientific">Rhodococcus jostii (strain RHA1)</name>
    <dbReference type="NCBI Taxonomy" id="101510"/>
    <lineage>
        <taxon>Bacteria</taxon>
        <taxon>Bacillati</taxon>
        <taxon>Actinomycetota</taxon>
        <taxon>Actinomycetes</taxon>
        <taxon>Mycobacteriales</taxon>
        <taxon>Nocardiaceae</taxon>
        <taxon>Rhodococcus</taxon>
    </lineage>
</organism>
<protein>
    <recommendedName>
        <fullName evidence="1">Phosphoenolpyruvate guanylyltransferase 1</fullName>
        <shortName evidence="1">PEP guanylyltransferase 1</shortName>
        <ecNumber evidence="1">2.7.7.105</ecNumber>
    </recommendedName>
</protein>
<gene>
    <name evidence="1" type="primary">fbiD</name>
    <name type="ordered locus">RHA1_ro06504</name>
</gene>
<proteinExistence type="inferred from homology"/>
<evidence type="ECO:0000255" key="1">
    <source>
        <dbReference type="HAMAP-Rule" id="MF_02114"/>
    </source>
</evidence>
<accession>Q0S2F9</accession>
<reference key="1">
    <citation type="journal article" date="2006" name="Proc. Natl. Acad. Sci. U.S.A.">
        <title>The complete genome of Rhodococcus sp. RHA1 provides insights into a catabolic powerhouse.</title>
        <authorList>
            <person name="McLeod M.P."/>
            <person name="Warren R.L."/>
            <person name="Hsiao W.W.L."/>
            <person name="Araki N."/>
            <person name="Myhre M."/>
            <person name="Fernandes C."/>
            <person name="Miyazawa D."/>
            <person name="Wong W."/>
            <person name="Lillquist A.L."/>
            <person name="Wang D."/>
            <person name="Dosanjh M."/>
            <person name="Hara H."/>
            <person name="Petrescu A."/>
            <person name="Morin R.D."/>
            <person name="Yang G."/>
            <person name="Stott J.M."/>
            <person name="Schein J.E."/>
            <person name="Shin H."/>
            <person name="Smailus D."/>
            <person name="Siddiqui A.S."/>
            <person name="Marra M.A."/>
            <person name="Jones S.J.M."/>
            <person name="Holt R."/>
            <person name="Brinkman F.S.L."/>
            <person name="Miyauchi K."/>
            <person name="Fukuda M."/>
            <person name="Davies J.E."/>
            <person name="Mohn W.W."/>
            <person name="Eltis L.D."/>
        </authorList>
    </citation>
    <scope>NUCLEOTIDE SEQUENCE [LARGE SCALE GENOMIC DNA]</scope>
    <source>
        <strain>RHA1</strain>
    </source>
</reference>
<name>FBID1_RHOJR</name>